<protein>
    <recommendedName>
        <fullName>Genome polyprotein</fullName>
    </recommendedName>
    <component>
        <recommendedName>
            <fullName>Leader protease</fullName>
            <shortName>Lpro</shortName>
            <ecNumber evidence="4">3.4.22.46</ecNumber>
        </recommendedName>
    </component>
    <component>
        <recommendedName>
            <fullName>Capsid protein VP0</fullName>
        </recommendedName>
        <alternativeName>
            <fullName>VP4-VP2</fullName>
        </alternativeName>
    </component>
    <component>
        <recommendedName>
            <fullName>Capsid protein VP4</fullName>
        </recommendedName>
        <alternativeName>
            <fullName>P1A</fullName>
        </alternativeName>
        <alternativeName>
            <fullName>Virion protein 4</fullName>
        </alternativeName>
    </component>
    <component>
        <recommendedName>
            <fullName>Capsid protein VP2</fullName>
        </recommendedName>
        <alternativeName>
            <fullName>P1B</fullName>
        </alternativeName>
        <alternativeName>
            <fullName>Virion protein 2</fullName>
        </alternativeName>
    </component>
    <component>
        <recommendedName>
            <fullName>Capsid protein VP3</fullName>
        </recommendedName>
        <alternativeName>
            <fullName>P1C</fullName>
        </alternativeName>
        <alternativeName>
            <fullName>Virion protein 3</fullName>
        </alternativeName>
    </component>
    <component>
        <recommendedName>
            <fullName>Capsid protein VP1</fullName>
        </recommendedName>
        <alternativeName>
            <fullName>P1D</fullName>
        </alternativeName>
        <alternativeName>
            <fullName>Virion protein 1</fullName>
        </alternativeName>
    </component>
    <component>
        <recommendedName>
            <fullName>Protein 2A</fullName>
            <shortName>P2A</shortName>
        </recommendedName>
        <alternativeName>
            <fullName>P52</fullName>
        </alternativeName>
    </component>
    <component>
        <recommendedName>
            <fullName>Protein 2B</fullName>
            <shortName>P2B</shortName>
        </recommendedName>
    </component>
    <component>
        <recommendedName>
            <fullName>Protein 2C</fullName>
            <shortName>P2C</shortName>
            <ecNumber evidence="4">3.6.1.15</ecNumber>
        </recommendedName>
    </component>
    <component>
        <recommendedName>
            <fullName>Protein 3A</fullName>
            <shortName>P3A</shortName>
        </recommendedName>
    </component>
    <component>
        <recommendedName>
            <fullName>Protein 3B-1</fullName>
            <shortName>P3B-1</shortName>
        </recommendedName>
        <alternativeName>
            <fullName>Genome-linked protein VPg1</fullName>
        </alternativeName>
    </component>
    <component>
        <recommendedName>
            <fullName>Protein 3B-2</fullName>
            <shortName>P3B-2</shortName>
        </recommendedName>
        <alternativeName>
            <fullName>Genome-linked protein VPg2</fullName>
        </alternativeName>
    </component>
    <component>
        <recommendedName>
            <fullName>Protein 3B-3</fullName>
            <shortName>P3B-3</shortName>
        </recommendedName>
        <alternativeName>
            <fullName>Genome-linked protein VPg3</fullName>
        </alternativeName>
    </component>
    <component>
        <recommendedName>
            <fullName>Protease 3C</fullName>
            <ecNumber>3.4.22.28</ecNumber>
        </recommendedName>
        <alternativeName>
            <fullName>Picornain 3C</fullName>
            <shortName>P3C</shortName>
        </alternativeName>
        <alternativeName>
            <fullName>Protease P20B</fullName>
        </alternativeName>
    </component>
    <component>
        <recommendedName>
            <fullName>RNA-directed RNA polymerase 3D-POL</fullName>
            <shortName>P3D-POL</shortName>
            <ecNumber evidence="4">2.7.7.48</ecNumber>
        </recommendedName>
        <alternativeName>
            <fullName>P56A</fullName>
        </alternativeName>
    </component>
</protein>
<sequence>MNTTNCFIALVYLIREIKTLFRSRTKGKMEFTLHNGEKKTFYSRPNNHDNCWLNTILQLFRYVDEPFFDWVYNSPENLTLDAIKQLENFTGLELHEGGPPALVIWNIKHLLQTGIGTASRPSEVCMVDGTDMCLADFHAGIFMKGQEHAVFACVTSDGWYAIDDEDFYPWTPDPSDVLVFVPYDQEPLNGDWKTQVQKKLKGAGQSSPATGSQNQSGNTGSIINNYYMQQYQNSMSTQLGDNTISGGSNEGSTDTTSTHTTNTQNNDWFSKLASSAFTGLFGALLADKKTEETTLLEDRILTTRNGHTTSTTQSSVGVTYGYSTEEDHVAGPNTSGLETRVVQAERFFKKFLFDWTTDKPFGYLTKLELPTDHHGVFGHLVDSYAYMRNGWDVEVSAVGNQFNGGCLLVAMVPEWKAFDTREKYQLTLFPHQFISPRTNMTAHITVPYLGVNRYDQYKKHKPWTLVVMVLSPLTVSNTAAPQIKVYANIAPTYVHVAGELPSKEGIFPVACADGYGGLVTTDPKTADPVYGKVYNPPKTNYPGRFTNLLDVAEACPTFLRFDDGKPYVVTRADDTRLLAKFDVSLAAKHMSNTYLSGIAQYYTQYSGTINLHFMFTGSTDSKARYMVAYIPPGVETPPDTPEEAAHCIHAEWDTGLNSKFTFSIPYVSAADYAYTASDTAETTNVQGWVCVYQITHGKAENDTLLVSASAGKDFELRLPIDPRTQTTTTGESADPVTTTVENYGGDTQVQRRHHTDVGFIMDRFVKINSLSPTHVIDLMQTHKHGIVGALLRAATYYFSDLEIVVRHDGNLTWVPNGAPEAALSNTSNPTAYNKAPFTRLALPYTAPHRVLATVYDGTNKYSASDSRSGDLGSIAARVATQLPASFNYGAIQAQAIHELLVRMKRAELYCPRPLLAIKVTSQDRYKQKIIAPAKQLLNFDLLKLAGDVESNLGPFFFADVRSNFSKLVDTINQMQEDMSTKHGPDFNRLVSAFEELATGVKAIRTGLDEAKPWYKLIKLLSRLSCMAAVAARSKDPVLVAIMLADTGLEILDSTFVVKKSSDSLSSLFHVPAPAFSFGAPVLLAGLVKVASSFFRSTPEDLERAEKQLKARDINDIFAILKNGEWLVKLILAIRDWIKAWIASEEKFVTMTDLVPGILEKQRDLNDPGKYKEAKEWLDNARQACLKSGNVHIANLCKVVAPAPSKSRPEPVVVCLRGKSGQGKSFLANVLAQAISTHFTGRIDSVWYCPPDPDHFDGYNQQTVVVMDDLGQNPDGKDFKYFAQMVSTTGFIPPMASLEDKGKPFNSKVIIATTNLYSGFTPRTMVCPDALNRRFHFDIDVSAKDGYKINNKLDIIKALEDTHTNPVAMFQYDCALLNGMAVEMKRLQQDMFKPQPPLQNVYQLVQEVIERVELHEKVSSHPIFKQISIPSQKSVLYFLIEKGQHEAAIEFFEGMVHDSVKEELRPLIQQTSFVKRAFKRLKENFEIVALCLTLLANIVIMIRETRKRQKMVDDAVNEYIERANITTDDKTLDEAEKNPLETSGASTVGFRERSLTGQKVRDDVSSEPAQPAEDQPQAEGPYSGPLERQKPLKVRAKLPQQEGPYAGPMERQKPLKVKVKAPVVKEGPYEGPVKKPVALKVKARNLIVTESGAPPTDLQKMVMGNTKPVELNLDGKTVAICCATGVFGTAYLVPRHLFAEKYDKIMLDGRAMTDSDYRVFEFEIKVKGQDMLSDAALIVLHRGNCVRDITKHFRDTARMKKGTPVVGVVNNADVGRLIFSGEALTYKDIVVCMDGDTMPGLFAYKAATRAGYCGGAVLAKDGADTFIVGTHSAGGNGVGYCSCVSRSMLQKMKAHVDPEPHHEGLIVDTRDVEERVHVMRKTKLAPTVAYGVFNPEFGPAALSNKDPRLNEGVVLDDVIFSKHKGDAKMTEEDKALFRRCAADYASRLHSVLGTANAPLSIYEAIKGVDGLDAMEPDTAPGLPWALQGKRRGALIDFENGTVGPEVEAALKLMEKREYKFACQTFLKDEIRPMEKVRAGKTRIVDVLPVEHILYTKMMIGRFCAQMHSNNGPQIGSAVGCNPDVDWQRFGTHFAQYRNVWDVDYSAFDANHCSDAMNIMFEEVFRTDFGFHPNAEWILKTLVNTEHAYENKRITVEGGMPSGCSATSIINTILNNIYVLYALRRHYEGVELDTYTMISYGDDIVVASDYDLDFEALKPHFKSLGQTITPADKSDKGFVLGQSITDVTFLKRHFHMDYGTGFYKPVMASKTLEAILSFARRGTIQEKLISVAGLAVHSGPDEYRRLFEPFQGLFEIPSYRSLYLRWVNAVCGDA</sequence>
<accession>P03306</accession>
<accession>Q64768</accession>
<accession>Q84750</accession>
<accession>Q84751</accession>
<accession>Q84752</accession>
<accession>Q84753</accession>
<accession>Q84754</accession>
<accession>Q84760</accession>
<accession>Q84761</accession>
<accession>Q84762</accession>
<accession>Q84763</accession>
<accession>Q84764</accession>
<accession>Q84765</accession>
<accession>Q84766</accession>
<accession>Q84767</accession>
<accession>Q84768</accession>
<accession>Q84769</accession>
<accession>Q89824</accession>
<comment type="function">
    <molecule>Leader protease</molecule>
    <text evidence="4 5">Autocatalytically cleaves itself from the polyprotein at the L/VP0 junction. Also cleaves the host translation initiation factors EIF4G1 and EIF4G3, in order to shut off the capped cellular mRNA transcription. Plays a role in counteracting host innate antiviral response using diverse mechanisms. Possesses a deubiquitinase activity acting on both 'Lys-48' and 'Lys-63'-linked polyubiquitin chains. In turn, inhibits the ubiquitination and subsequent activation of key signaling molecules of type I IFN response such as host RIGI, TBK1, TRAF3 and TRAF6. Inhibits host NF-kappa-B activity by inducing a decrease in RELA mRNA levels. Cleaves a peptide bond in the C-terminus of host ISG15, resulting in the damaging of this modifier that can no longer be attached to target proteins. Also cleaves host G3BP1 and G3BP2 in order to inhibit cytoplasmic stress granules assembly.</text>
</comment>
<comment type="function">
    <molecule>Capsid protein VP4</molecule>
    <text evidence="3">Lies on the inner surface of the capsid shell. After binding to the host receptor, the capsid undergoes conformational changes. Capsid protein VP4 is released, capsid protein VP1 N-terminus is externalized, and together, they shape a pore in the host membrane through which the viral genome is translocated into the host cell cytoplasm. After genome has been released, the channel shrinks.</text>
</comment>
<comment type="function">
    <molecule>Capsid protein VP2</molecule>
    <text evidence="4 16">Forms an icosahedral capsid of pseudo T=3 symmetry with capsid proteins VP1 and VP3 (By similarity). The capsid is composed of 60 copies of each capsid protein organized in the form of twelve pentamers and encloses the viral positive strand RNA genome (PubMed:28937999). Upon acidifcation in the endosome, dissociates into pentamers (PubMed:28937999).</text>
</comment>
<comment type="function">
    <molecule>Capsid protein VP1</molecule>
    <text evidence="4 16">Forms an icosahedral capsid of pseudo T=3 symmetry with capsid proteins VP2 and VP3 (By similarity). The capsid is composed of 60 copies of each capsid protein organized in the form of twelve pentamers and encloses the viral positive strand RNA genome (PubMed:28937999). Mediates cell entry by attachment to an integrin receptor, usually host ITGAV/ITGB6. In addition, targets host MAVS to suppress type I IFN pathway (By similarity). Upon acidifcation in the endosome, dissociates into pentamers (PubMed:28937999).</text>
</comment>
<comment type="function">
    <molecule>Capsid protein VP3</molecule>
    <text evidence="4 16">Forms an icosahedral capsid of pseudo T=3 symmetry with capsid proteins VP0 and VP3 (By similarity). The capsid is composed of 60 copies of each capsid protein organized in the form of twelve pentamers and encloses the viral positive strand RNA genome (PubMed:28937999).</text>
</comment>
<comment type="function">
    <molecule>Protein 2A</molecule>
    <text evidence="4">Mediates self-processing of the polyprotein by a translational effect termed 'ribosome skipping'. Mechanistically, 2A-mediated cleavage occurs between the C-terminal glycine and the proline of the downstream protein 2B. In the case of foot-and-mouth disease virus, the 2A oligopeptide is post-translationally 'trimmed' from the C-terminus of the upstream protein 1D by 3C proteinase.</text>
</comment>
<comment type="function">
    <molecule>Protein 2B</molecule>
    <text evidence="4">Plays an essential role in the virus replication cycle by acting as a viroporin. Creates a pore in the host endoplasmic reticulum and as a consequence releases Ca2+ in the cytoplasm of infected cell. In turn, high levels of cytoplasmic calcium may trigger membrane trafficking and transport of viral ER-associated proteins to viroplasms, sites of viral genome replication.</text>
</comment>
<comment type="function">
    <molecule>Protein 2C</molecule>
    <text evidence="4">Associates with and induces structural rearrangements of intracellular membranes. Triggers host autophagy by interacting with host BECN1 and thereby promotes viral replication. Participates in viral replication and interacts with host DHX9. Displays RNA-binding, nucleotide binding and NTPase activities. May play a role in virion morphogenesis and viral RNA encapsidation by interacting with the capsid protein VP3.</text>
</comment>
<comment type="function">
    <molecule>Protein 3A</molecule>
    <text evidence="4">Plays important roles in virus replication, virulence and host range. Cooperates with host DDX56 to inhibit IRF3 nuclear translocation and subsequent type I interferon production.</text>
</comment>
<comment type="function">
    <molecule>Protein 3B-1</molecule>
    <text evidence="4">Covalently linked to the 5'-end of both the positive-strand and negative-strand genomic RNAs. Acts as a genome-linked replication primer.</text>
</comment>
<comment type="function">
    <molecule>Protein 3B-2</molecule>
    <text evidence="4">Covalently linked to the 5'-end of both the positive-strand and negative-strand genomic RNAs. Acts as a genome-linked replication primer.</text>
</comment>
<comment type="function">
    <molecule>Protein 3B-3</molecule>
    <text evidence="4">Covalently linked to the 5'-end0 of both the positive-strand and negative-strand genomic RNAs. Acts as a genome-linked replication primer.</text>
</comment>
<comment type="function">
    <molecule>Protease 3C</molecule>
    <text evidence="4">Cysteine protease that generates mature viral proteins from the precursor polyprotein. In addition to its proteolytic activity, binds to viral RNA and thus influences viral genome replication. RNA and substrate bind cooperatively to the protease.</text>
</comment>
<comment type="function">
    <text evidence="4">RNA-directed RNA polymerase 3D-POL replicates genomic and antigenomic RNA by recognizing replications specific signals. Covalently attaches UMP to a tyrosine of VPg, which is used to prime RNA synthesis. The positive stranded RNA genome is first replicated at virus induced membranous vesicles, creating a dsRNA genomic replication form. This dsRNA is then used as template to synthesize positive stranded RNA genomes. ss(+)RNA genomes are either translated, replicated or encapsidated.</text>
</comment>
<comment type="catalytic activity">
    <molecule>Leader protease</molecule>
    <reaction>
        <text>Autocatalytically cleaves itself from the polyprotein of the foot-and-mouth disease virus by hydrolysis of a Lys-|-Gly bond, but then cleaves host cell initiation factor eIF-4G at bonds -Gly-|-Arg- and -Lys-|-Arg-.</text>
        <dbReference type="EC" id="3.4.22.46"/>
    </reaction>
</comment>
<comment type="catalytic activity">
    <molecule>Protein 2C</molecule>
    <reaction evidence="4">
        <text>a ribonucleoside 5'-triphosphate + H2O = a ribonucleoside 5'-diphosphate + phosphate + H(+)</text>
        <dbReference type="Rhea" id="RHEA:23680"/>
        <dbReference type="ChEBI" id="CHEBI:15377"/>
        <dbReference type="ChEBI" id="CHEBI:15378"/>
        <dbReference type="ChEBI" id="CHEBI:43474"/>
        <dbReference type="ChEBI" id="CHEBI:57930"/>
        <dbReference type="ChEBI" id="CHEBI:61557"/>
        <dbReference type="EC" id="3.6.1.15"/>
    </reaction>
</comment>
<comment type="catalytic activity">
    <molecule>RNA-directed RNA polymerase 3D-POL</molecule>
    <reaction evidence="9">
        <text>RNA(n) + a ribonucleoside 5'-triphosphate = RNA(n+1) + diphosphate</text>
        <dbReference type="Rhea" id="RHEA:21248"/>
        <dbReference type="Rhea" id="RHEA-COMP:14527"/>
        <dbReference type="Rhea" id="RHEA-COMP:17342"/>
        <dbReference type="ChEBI" id="CHEBI:33019"/>
        <dbReference type="ChEBI" id="CHEBI:61557"/>
        <dbReference type="ChEBI" id="CHEBI:140395"/>
        <dbReference type="EC" id="2.7.7.48"/>
    </reaction>
</comment>
<comment type="catalytic activity">
    <molecule>Protease 3C</molecule>
    <reaction evidence="11">
        <text>Selective cleavage of Gln-|-Gly bond in the poliovirus polyprotein. In other picornavirus reactions Glu may be substituted for Gln, and Ser or Thr for Gly.</text>
        <dbReference type="EC" id="3.4.22.28"/>
    </reaction>
</comment>
<comment type="subunit">
    <molecule>Leader protease</molecule>
    <text evidence="4">Interacts with host ISG15.</text>
</comment>
<comment type="subunit">
    <molecule>Capsid protein VP1</molecule>
    <text evidence="4">Interacts (via R-G-D motif) with host ITGAV/ITGB6 (By similarity). Interacts with host MAVS; this interaction inhibits binding of host TRAF3 to MAVS, thereby suppressing interferon-mediated responses (By similarity).</text>
</comment>
<comment type="subunit">
    <molecule>Protein 2B</molecule>
    <text evidence="4">Forms homooligomers.</text>
</comment>
<comment type="subunit">
    <molecule>Protein 2C</molecule>
    <text evidence="4">Homohexamer. Interacts with host VIM. Interacts with host BECN1.</text>
</comment>
<comment type="subunit">
    <molecule>Protein 3A</molecule>
    <text evidence="4">Interacts with host DCTN3.</text>
</comment>
<comment type="subunit">
    <molecule>Protein 3B-1</molecule>
    <text evidence="6">Interacts with RNA-dependent RNA polymerase; this interaction allows 3B-1 to binds 2 polymerases and act as a primer. It also allows the recruitment of the RNA-dependent RNA polymerase to host membranes.</text>
</comment>
<comment type="subunit">
    <molecule>Protein 3B-2</molecule>
    <text evidence="6">Interacts with RNA-dependent RNA polymerase; this interaction allows 3B-2 to act as a primer.</text>
</comment>
<comment type="subunit">
    <molecule>Protein 3B-3</molecule>
    <text evidence="6">Interacts with RNA-dependent RNA polymerase; this interaction allows 3B-3 to act as a primer.</text>
</comment>
<comment type="subunit">
    <molecule>RNA-directed RNA polymerase 3D-POL</molecule>
    <text evidence="6">Interacts with 3B-1; this interaction allows 3B-1 to binds 2 polymerases and act as a primer. It also allows the recruitment of the RNA-dependent RNA polymerase to host membranes (By similarity). Interacts with 3B-2; this interaction allows 3B-2 to act as a primer (By similarity). Interacts with 3B-3; this interaction allows 3B-3 to act as a primer (By similarity).</text>
</comment>
<comment type="subcellular location">
    <molecule>Leader protease</molecule>
    <subcellularLocation>
        <location evidence="4">Host nucleus</location>
    </subcellularLocation>
    <subcellularLocation>
        <location evidence="4">Host cytoplasm</location>
    </subcellularLocation>
</comment>
<comment type="subcellular location">
    <molecule>Capsid protein VP2</molecule>
    <subcellularLocation>
        <location evidence="4">Virion</location>
    </subcellularLocation>
    <subcellularLocation>
        <location evidence="17">Host cytoplasm</location>
    </subcellularLocation>
</comment>
<comment type="subcellular location">
    <molecule>Capsid protein VP3</molecule>
    <subcellularLocation>
        <location evidence="4">Virion</location>
    </subcellularLocation>
    <subcellularLocation>
        <location evidence="17">Host cytoplasm</location>
    </subcellularLocation>
</comment>
<comment type="subcellular location">
    <molecule>Capsid protein VP1</molecule>
    <subcellularLocation>
        <location evidence="4">Virion</location>
    </subcellularLocation>
    <subcellularLocation>
        <location evidence="17">Host cytoplasm</location>
    </subcellularLocation>
</comment>
<comment type="subcellular location">
    <molecule>Protein 2B</molecule>
    <subcellularLocation>
        <location evidence="4">Host endoplasmic reticulum membrane</location>
    </subcellularLocation>
</comment>
<comment type="subcellular location">
    <molecule>Protein 2C</molecule>
    <subcellularLocation>
        <location evidence="17">Host cytoplasmic vesicle membrane</location>
        <topology evidence="17">Peripheral membrane protein</topology>
        <orientation evidence="17">Cytoplasmic side</orientation>
    </subcellularLocation>
    <text evidence="1">Probably localizes to the surface of intracellular membrane vesicles that are induced after virus infection as the site for viral RNA replication. These vesicles are derived from the endoplasmic reticulum (By similarity).</text>
</comment>
<comment type="subcellular location">
    <molecule>Protein 3A</molecule>
    <subcellularLocation>
        <location evidence="17">Host cytoplasmic vesicle membrane</location>
        <topology evidence="17">Peripheral membrane protein</topology>
        <orientation evidence="17">Cytoplasmic side</orientation>
    </subcellularLocation>
    <text evidence="1">Probably localizes to the surface of intracellular membrane vesicles that are induced after virus infection as the site for viral RNA replication. These vesicles are derived from the endoplasmic reticulum (By similarity).</text>
</comment>
<comment type="subcellular location">
    <molecule>Protein 3B-1</molecule>
    <subcellularLocation>
        <location evidence="17">Virion</location>
    </subcellularLocation>
</comment>
<comment type="subcellular location">
    <molecule>Protein 3B-2</molecule>
    <subcellularLocation>
        <location evidence="17">Virion</location>
    </subcellularLocation>
</comment>
<comment type="subcellular location">
    <molecule>Protein 3B-3</molecule>
    <subcellularLocation>
        <location evidence="17">Virion</location>
    </subcellularLocation>
</comment>
<comment type="subcellular location">
    <molecule>Protease 3C</molecule>
    <subcellularLocation>
        <location evidence="17">Host cytoplasm</location>
    </subcellularLocation>
</comment>
<comment type="subcellular location">
    <molecule>RNA-directed RNA polymerase 3D-POL</molecule>
    <subcellularLocation>
        <location evidence="17">Host cytoplasmic vesicle membrane</location>
        <topology evidence="17">Peripheral membrane protein</topology>
        <orientation evidence="17">Cytoplasmic side</orientation>
    </subcellularLocation>
    <text evidence="1">Probably localizes to the surface of intracellular membrane vesicles that are induced after virus infection as the site for viral RNA replication. These vesicles are derived from the endoplasmic reticulum (By similarity).</text>
</comment>
<comment type="alternative products">
    <event type="alternative initiation"/>
    <isoform>
        <id>P03306-1</id>
        <name>Lab</name>
        <name>P20a</name>
        <sequence type="displayed"/>
    </isoform>
    <isoform>
        <id>P03306-2</id>
        <name>Lb</name>
        <name>P160</name>
        <sequence type="described" ref="VSP_018979"/>
    </isoform>
    <text>Both isoforms are able to cleave the L/VP0 junction and the host translation initiation factor EIF4G1.</text>
</comment>
<comment type="PTM">
    <molecule>Leader protease</molecule>
    <text evidence="4">Removes six residues from its own C-terminus, generating sLb(pro).</text>
</comment>
<comment type="PTM">
    <molecule>Genome polyprotein</molecule>
    <text evidence="4">Specific enzymatic cleavages in vivo by the viral proteases yield a variety of precursors and mature proteins. The polyprotein seems to be cotranslationally cleaved at the 2A/2B junction by a ribosomal skip from one codon to the next without formation of a peptide bond. This process would release the L-P1-2A peptide from the translational complex.</text>
</comment>
<comment type="PTM">
    <molecule>Capsid protein VP0</molecule>
    <text evidence="4">During virion maturation, immature virions are rendered infectious following cleavage of VP0 into VP4 and VP2. This maturation seems to be an autocatalytic event triggered by the presence of RNA in the capsid and is followed by a conformational change of the particle.</text>
</comment>
<comment type="PTM">
    <molecule>Capsid protein VP4</molecule>
    <text evidence="6">Myristoylation is required during RNA encapsidation and formation of the mature virus particle.</text>
</comment>
<comment type="PTM">
    <molecule>Protein 3B-1</molecule>
    <text evidence="4">Uridylylated by the polymerase and covalently linked to the 5'-end of genomic RNA. These uridylylated forms act as a nucleotide-peptide primer for the polymerase.</text>
</comment>
<comment type="PTM">
    <molecule>Protein 3B-2</molecule>
    <text evidence="4">Uridylylated by the polymerase and covalently linked to the 5'-end of genomic RNA. These uridylylated forms act as a nucleotide-peptide primer for the polymerase.</text>
</comment>
<comment type="PTM">
    <molecule>Protein 3B-3</molecule>
    <text evidence="4">Uridylylated by the polymerase and covalently linked to the 5'-end of genomic RNA. These uridylylated forms act as a nucleotide-peptide primer for the polymerase.</text>
</comment>
<comment type="miscellaneous">
    <molecule>Capsid protein VP1</molecule>
    <text evidence="17">Contains the main antigenic determinants of the virion; therefore, changes in its sequence must be responsible for the high antigenic variability of the virus.</text>
</comment>
<comment type="miscellaneous">
    <text evidence="1">The capsid protein VP1 contains the main antigenic determinants of the virion; therefore, changes in its sequence must be responsible for the high antigenic variability of the virus.</text>
</comment>
<comment type="similarity">
    <text evidence="17">Belongs to the picornaviruses polyprotein family.</text>
</comment>
<comment type="sequence caution" evidence="17">
    <conflict type="frameshift">
        <sequence resource="EMBL-CDS" id="CAA25127"/>
    </conflict>
</comment>
<reference key="1">
    <citation type="journal article" date="1984" name="Nucleic Acids Res.">
        <title>The complete nucleotide sequence of the RNA coding for the primary translation product of foot and mouth disease virus.</title>
        <authorList>
            <person name="Carroll A.R."/>
            <person name="Rowlands D.J."/>
            <person name="Clarke B.E."/>
        </authorList>
    </citation>
    <scope>NUCLEOTIDE SEQUENCE [GENOMIC RNA]</scope>
</reference>
<reference key="2">
    <citation type="journal article" date="1982" name="Gene">
        <title>The nucleotide sequence of cDNA coding for the structural proteins of foot-and-mouth disease virus.</title>
        <authorList>
            <person name="Boothroyd J.C."/>
            <person name="Harris T.J.R."/>
            <person name="Rowlands D.J."/>
            <person name="Lowe P.A."/>
        </authorList>
    </citation>
    <scope>NUCLEOTIDE SEQUENCE [GENOMIC RNA] OF 115-1048</scope>
</reference>
<reference key="3">
    <citation type="journal article" date="1987" name="Nucleic Acids Res.">
        <title>All foot and mouth disease virus serotypes initiate protein synthesis at two separate AUGs.</title>
        <authorList>
            <person name="Sangar D.V."/>
            <person name="Newton S.E."/>
            <person name="Rowlands D.J."/>
            <person name="Clarke B.E."/>
        </authorList>
    </citation>
    <scope>ALTERNATIVE INITIATION</scope>
</reference>
<reference evidence="20" key="4">
    <citation type="journal article" date="2005" name="J. Biol. Chem.">
        <title>Crystal structure of foot-and-mouth disease virus 3C protease. New insights into catalytic mechanism and cleavage specificity.</title>
        <authorList>
            <person name="Birtley J.R."/>
            <person name="Knox S.R."/>
            <person name="Jaulent A.M."/>
            <person name="Brick P."/>
            <person name="Leatherbarrow R.J."/>
            <person name="Curry S."/>
        </authorList>
    </citation>
    <scope>X-RAY CRYSTALLOGRAPHY (1.90 ANGSTROMS) OF 1650-1855</scope>
    <scope>ACTIVE SITE (PROTEASE 3C)</scope>
</reference>
<reference evidence="18 19" key="5">
    <citation type="journal article" date="2005" name="J. Gen. Virol.">
        <title>Structure of Foot-and-mouth disease virus serotype A10 61 alone and complexed with oligosaccharide receptor: receptor conservation in the face of antigenic variation.</title>
        <authorList>
            <person name="Fry E.E."/>
            <person name="Newman J.W."/>
            <person name="Curry S."/>
            <person name="Najjam S."/>
            <person name="Jackson T."/>
            <person name="Blakemore W."/>
            <person name="Lea S.M."/>
            <person name="Miller L."/>
            <person name="Burman A."/>
            <person name="King A.M."/>
            <person name="Stuart D.I."/>
        </authorList>
    </citation>
    <scope>X-RAY CRYSTALLOGRAPHY (2.00 ANGSTROMS) OF 202-937</scope>
</reference>
<reference evidence="21" key="6">
    <citation type="journal article" date="2007" name="J. Virol.">
        <title>Structural and mutagenic analysis of foot-and-mouth disease virus 3C protease reveals the role of the beta-ribbon in proteolysis.</title>
        <authorList>
            <person name="Sweeney T.R."/>
            <person name="Roque-Rosell N."/>
            <person name="Birtley J.R."/>
            <person name="Leatherbarrow R.J."/>
            <person name="Curry S."/>
        </authorList>
    </citation>
    <scope>X-RAY CRYSTALLOGRAPHY (2.20 ANGSTROMS) OF 1649-1855</scope>
    <scope>MUTAGENESIS OF CYS-1791</scope>
</reference>
<reference evidence="22 23" key="7">
    <citation type="journal article" date="2010" name="J. Mol. Biol.">
        <title>Insights into cleavage specificity from the crystal structure of foot-and-mouth disease virus 3C protease complexed with a peptide substrate.</title>
        <authorList>
            <person name="Zunszain P.A."/>
            <person name="Knox S.R."/>
            <person name="Sweeney T.R."/>
            <person name="Yang J."/>
            <person name="Roque-Rosell N."/>
            <person name="Belsham G.J."/>
            <person name="Leatherbarrow R.J."/>
            <person name="Curry S."/>
        </authorList>
    </citation>
    <scope>X-RAY CRYSTALLOGRAPHY (2.50 ANGSTROMS) OF 1650-1862 AND 931-940</scope>
</reference>
<reference evidence="24 25" key="8">
    <citation type="journal article" date="2017" name="PLoS Pathog.">
        <title>Structures of foot and mouth disease virus pentamers: Insight into capsid dissociation and unexpected pentamer reassociation.</title>
        <authorList>
            <person name="Malik N."/>
            <person name="Kotecha A."/>
            <person name="Gold S."/>
            <person name="Asfor A."/>
            <person name="Ren J."/>
            <person name="Huiskonen J.T."/>
            <person name="Tuthill T.J."/>
            <person name="Fry E.E."/>
            <person name="Stuart D.I."/>
        </authorList>
    </citation>
    <scope>STRUCTURE BY ELECTRON MICROSCOPY (5.20 ANGSTROMS) OF 752-933; 315-496 AND 505-725</scope>
    <scope>FUNCTION (CAPSID PROTEIN VP1)</scope>
    <scope>FUNCTION (CAPSID PROTEIN VP2)</scope>
    <scope>FUNCTION (CAPSID PROTEIN VP3)</scope>
</reference>
<organismHost>
    <name type="scientific">Bos taurus</name>
    <name type="common">Bovine</name>
    <dbReference type="NCBI Taxonomy" id="9913"/>
</organismHost>
<organismHost>
    <name type="scientific">Capra hircus</name>
    <name type="common">Goat</name>
    <dbReference type="NCBI Taxonomy" id="9925"/>
</organismHost>
<organismHost>
    <name type="scientific">Cervidae</name>
    <name type="common">Deer</name>
    <dbReference type="NCBI Taxonomy" id="9850"/>
</organismHost>
<organismHost>
    <name type="scientific">Erinaceidae</name>
    <name type="common">hedgehogs</name>
    <dbReference type="NCBI Taxonomy" id="9363"/>
</organismHost>
<organismHost>
    <name type="scientific">Loxodonta africana</name>
    <name type="common">African elephant</name>
    <dbReference type="NCBI Taxonomy" id="9785"/>
</organismHost>
<organismHost>
    <name type="scientific">Ovis aries</name>
    <name type="common">Sheep</name>
    <dbReference type="NCBI Taxonomy" id="9940"/>
</organismHost>
<organismHost>
    <name type="scientific">Rattus norvegicus</name>
    <name type="common">Rat</name>
    <dbReference type="NCBI Taxonomy" id="10116"/>
</organismHost>
<organismHost>
    <name type="scientific">Sus scrofa</name>
    <name type="common">Pig</name>
    <dbReference type="NCBI Taxonomy" id="9823"/>
</organismHost>
<proteinExistence type="evidence at protein level"/>
<keyword id="KW-0002">3D-structure</keyword>
<keyword id="KW-0024">Alternative initiation</keyword>
<keyword id="KW-0067">ATP-binding</keyword>
<keyword id="KW-0167">Capsid protein</keyword>
<keyword id="KW-1165">Clathrin-mediated endocytosis of virus by host</keyword>
<keyword id="KW-0191">Covalent protein-RNA linkage</keyword>
<keyword id="KW-1015">Disulfide bond</keyword>
<keyword id="KW-0347">Helicase</keyword>
<keyword id="KW-1035">Host cytoplasm</keyword>
<keyword id="KW-1036">Host cytoplasmic vesicle</keyword>
<keyword id="KW-1038">Host endoplasmic reticulum</keyword>
<keyword id="KW-1043">Host membrane</keyword>
<keyword id="KW-1048">Host nucleus</keyword>
<keyword id="KW-0945">Host-virus interaction</keyword>
<keyword id="KW-0378">Hydrolase</keyword>
<keyword id="KW-0407">Ion channel</keyword>
<keyword id="KW-0406">Ion transport</keyword>
<keyword id="KW-0449">Lipoprotein</keyword>
<keyword id="KW-0472">Membrane</keyword>
<keyword id="KW-1122">Modulation of host chromatin by virus</keyword>
<keyword id="KW-0519">Myristate</keyword>
<keyword id="KW-0547">Nucleotide-binding</keyword>
<keyword id="KW-0548">Nucleotidyltransferase</keyword>
<keyword id="KW-0597">Phosphoprotein</keyword>
<keyword id="KW-0645">Protease</keyword>
<keyword id="KW-0694">RNA-binding</keyword>
<keyword id="KW-0696">RNA-directed RNA polymerase</keyword>
<keyword id="KW-1143">T=pseudo3 icosahedral capsid protein</keyword>
<keyword id="KW-0788">Thiol protease</keyword>
<keyword id="KW-0808">Transferase</keyword>
<keyword id="KW-0810">Translation regulation</keyword>
<keyword id="KW-0813">Transport</keyword>
<keyword id="KW-1161">Viral attachment to host cell</keyword>
<keyword id="KW-1182">Viral ion channel</keyword>
<keyword id="KW-1162">Viral penetration into host cytoplasm</keyword>
<keyword id="KW-0693">Viral RNA replication</keyword>
<keyword id="KW-0946">Virion</keyword>
<keyword id="KW-1164">Virus endocytosis by host</keyword>
<keyword id="KW-1160">Virus entry into host cell</keyword>
<feature type="chain" id="PRO_0000039816" description="Genome polyprotein">
    <location>
        <begin position="1"/>
        <end position="2332"/>
    </location>
</feature>
<feature type="chain" id="PRO_0000039817" description="Leader protease" evidence="8">
    <location>
        <begin position="1"/>
        <end position="201"/>
    </location>
</feature>
<feature type="chain" id="PRO_0000374073" description="Capsid protein VP0" evidence="8">
    <location>
        <begin position="202"/>
        <end position="504"/>
    </location>
</feature>
<feature type="chain" id="PRO_0000039820" description="Capsid protein VP4" evidence="8">
    <location>
        <begin position="202"/>
        <end position="286"/>
    </location>
</feature>
<feature type="chain" id="PRO_0000039821" description="Capsid protein VP2" evidence="8">
    <location>
        <begin position="287"/>
        <end position="504"/>
    </location>
</feature>
<feature type="chain" id="PRO_0000039822" description="Capsid protein VP3" evidence="8">
    <location>
        <begin position="505"/>
        <end position="725"/>
    </location>
</feature>
<feature type="chain" id="PRO_0000039823" description="Capsid protein VP1" evidence="8">
    <location>
        <begin position="726"/>
        <end position="935"/>
    </location>
</feature>
<feature type="chain" id="PRO_0000039824" description="Protein 2A" evidence="8">
    <location>
        <begin position="936"/>
        <end position="953"/>
    </location>
</feature>
<feature type="chain" id="PRO_0000310973" description="Protein 2B" evidence="8">
    <location>
        <begin position="954"/>
        <end position="1107"/>
    </location>
</feature>
<feature type="chain" id="PRO_0000310974" description="Protein 2C" evidence="8">
    <location>
        <begin position="1108"/>
        <end position="1425"/>
    </location>
</feature>
<feature type="chain" id="PRO_0000310975" description="Protein 3A" evidence="8">
    <location>
        <begin position="1426"/>
        <end position="1578"/>
    </location>
</feature>
<feature type="chain" id="PRO_0000039825" description="Protein 3B-1" evidence="8">
    <location>
        <begin position="1579"/>
        <end position="1601"/>
    </location>
</feature>
<feature type="chain" id="PRO_0000039826" description="Protein 3B-2" evidence="8">
    <location>
        <begin position="1602"/>
        <end position="1625"/>
    </location>
</feature>
<feature type="chain" id="PRO_0000039827" description="Protein 3B-3" evidence="8">
    <location>
        <begin position="1626"/>
        <end position="1649"/>
    </location>
</feature>
<feature type="chain" id="PRO_0000039828" description="Protease 3C" evidence="8">
    <location>
        <begin position="1650"/>
        <end position="1862"/>
    </location>
</feature>
<feature type="chain" id="PRO_0000039829" description="RNA-directed RNA polymerase 3D-POL" evidence="8">
    <location>
        <begin position="1863"/>
        <end position="2332"/>
    </location>
</feature>
<feature type="topological domain" description="Cytoplasmic" evidence="8">
    <location>
        <begin position="1"/>
        <end position="1480"/>
    </location>
</feature>
<feature type="intramembrane region" evidence="8">
    <location>
        <begin position="1481"/>
        <end position="1501"/>
    </location>
</feature>
<feature type="topological domain" description="Cytoplasmic" evidence="8">
    <location>
        <begin position="1502"/>
        <end position="2332"/>
    </location>
</feature>
<feature type="domain" description="Peptidase C28">
    <location>
        <begin position="1"/>
        <end position="201"/>
    </location>
</feature>
<feature type="domain" description="SF3 helicase" evidence="10">
    <location>
        <begin position="1189"/>
        <end position="1353"/>
    </location>
</feature>
<feature type="domain" description="Peptidase C3" evidence="11">
    <location>
        <begin position="1652"/>
        <end position="1848"/>
    </location>
</feature>
<feature type="domain" description="RdRp catalytic" evidence="9">
    <location>
        <begin position="2096"/>
        <end position="2214"/>
    </location>
</feature>
<feature type="region of interest" description="Disordered" evidence="12">
    <location>
        <begin position="199"/>
        <end position="218"/>
    </location>
</feature>
<feature type="region of interest" description="Disordered" evidence="12">
    <location>
        <begin position="237"/>
        <end position="264"/>
    </location>
</feature>
<feature type="region of interest" description="Antigenic epitope" evidence="2">
    <location>
        <begin position="789"/>
        <end position="797"/>
    </location>
</feature>
<feature type="region of interest" description="Disordered" evidence="12">
    <location>
        <begin position="1529"/>
        <end position="1588"/>
    </location>
</feature>
<feature type="short sequence motif" description="Cell attachment site" evidence="14">
    <location>
        <begin position="867"/>
        <end position="870"/>
    </location>
</feature>
<feature type="short sequence motif" description="Nuclear localization signal" evidence="6">
    <location>
        <begin position="1878"/>
        <end position="1886"/>
    </location>
</feature>
<feature type="compositionally biased region" description="Polar residues" evidence="12">
    <location>
        <begin position="204"/>
        <end position="218"/>
    </location>
</feature>
<feature type="compositionally biased region" description="Polar residues" evidence="12">
    <location>
        <begin position="237"/>
        <end position="251"/>
    </location>
</feature>
<feature type="compositionally biased region" description="Low complexity" evidence="12">
    <location>
        <begin position="252"/>
        <end position="264"/>
    </location>
</feature>
<feature type="compositionally biased region" description="Basic and acidic residues" evidence="12">
    <location>
        <begin position="1529"/>
        <end position="1538"/>
    </location>
</feature>
<feature type="compositionally biased region" description="Basic and acidic residues" evidence="12">
    <location>
        <begin position="1549"/>
        <end position="1563"/>
    </location>
</feature>
<feature type="active site" description="For leader protease activity" evidence="1">
    <location>
        <position position="51"/>
    </location>
</feature>
<feature type="active site" description="For leader protease activity" evidence="1">
    <location>
        <position position="148"/>
    </location>
</feature>
<feature type="active site" description="For leader protease activity" evidence="1">
    <location>
        <position position="163"/>
    </location>
</feature>
<feature type="active site" description="For protease 3C activity; Proton donor/acceptor" evidence="11 13">
    <location>
        <position position="1695"/>
    </location>
</feature>
<feature type="active site" description="For protease 3C activity" evidence="11 13">
    <location>
        <position position="1733"/>
    </location>
</feature>
<feature type="active site" description="For protease 3C activity" evidence="11 13">
    <location>
        <position position="1812"/>
    </location>
</feature>
<feature type="active site" description="For RdRp activity" evidence="7">
    <location>
        <position position="2200"/>
    </location>
</feature>
<feature type="binding site" evidence="10">
    <location>
        <begin position="1217"/>
        <end position="1224"/>
    </location>
    <ligand>
        <name>ATP</name>
        <dbReference type="ChEBI" id="CHEBI:30616"/>
    </ligand>
</feature>
<feature type="site" description="Cleavage; by leader protease" evidence="8">
    <location>
        <begin position="201"/>
        <end position="202"/>
    </location>
</feature>
<feature type="site" description="Cleavage" evidence="8">
    <location>
        <begin position="286"/>
        <end position="287"/>
    </location>
</feature>
<feature type="site" description="Cleavage; by picornain 3C" evidence="8">
    <location>
        <begin position="504"/>
        <end position="505"/>
    </location>
</feature>
<feature type="site" description="Cleavage; by picornain 3C" evidence="8">
    <location>
        <begin position="725"/>
        <end position="726"/>
    </location>
</feature>
<feature type="site" description="Cleavage; by picornain 3C" evidence="8">
    <location>
        <begin position="935"/>
        <end position="936"/>
    </location>
</feature>
<feature type="site" description="Cleavage; by ribosomal skip" evidence="8">
    <location>
        <begin position="953"/>
        <end position="954"/>
    </location>
</feature>
<feature type="site" description="Cleavage; by picornain 3C" evidence="8">
    <location>
        <begin position="1107"/>
        <end position="1108"/>
    </location>
</feature>
<feature type="site" description="Cleavage; by picornain 3C" evidence="8">
    <location>
        <begin position="1425"/>
        <end position="1426"/>
    </location>
</feature>
<feature type="site" description="Cleavage; by picornain 3C" evidence="8">
    <location>
        <begin position="1578"/>
        <end position="1579"/>
    </location>
</feature>
<feature type="site" description="Cleavage; by picornain 3C" evidence="8">
    <location>
        <begin position="1601"/>
        <end position="1602"/>
    </location>
</feature>
<feature type="site" description="Cleavage; by picornain 3C" evidence="8">
    <location>
        <begin position="1625"/>
        <end position="1626"/>
    </location>
</feature>
<feature type="site" description="Cleavage; by picornain 3C" evidence="8">
    <location>
        <begin position="1649"/>
        <end position="1650"/>
    </location>
</feature>
<feature type="site" description="Important for catalytic activity" evidence="20">
    <location>
        <position position="1831"/>
    </location>
</feature>
<feature type="site" description="Cleavage; by picornain 3C" evidence="8">
    <location>
        <begin position="1862"/>
        <end position="1863"/>
    </location>
</feature>
<feature type="modified residue" description="O-(5'-phospho-RNA)-tyrosine" evidence="4">
    <location>
        <position position="1581"/>
    </location>
</feature>
<feature type="modified residue" description="O-(5'-phospho-RNA)-tyrosine" evidence="4">
    <location>
        <position position="1604"/>
    </location>
</feature>
<feature type="modified residue" description="O-(5'-phospho-RNA)-tyrosine" evidence="4">
    <location>
        <position position="1628"/>
    </location>
</feature>
<feature type="lipid moiety-binding region" description="N-myristoyl glycine; by host" evidence="6">
    <location>
        <position position="202"/>
    </location>
</feature>
<feature type="disulfide bond" description="Interchain; in VP3 dimer" evidence="4">
    <location>
        <position position="511"/>
    </location>
</feature>
<feature type="splice variant" id="VSP_018979" description="In isoform Lb." evidence="17">
    <location>
        <begin position="1"/>
        <end position="28"/>
    </location>
</feature>
<feature type="mutagenesis site" description="Almost complete loss of picornain 3C activity." evidence="15">
    <original>C</original>
    <variation>S</variation>
    <location>
        <position position="1791"/>
    </location>
</feature>
<feature type="sequence conflict" description="In Ref. 2; CAA24361." evidence="17" ref="2">
    <original>S</original>
    <variation>C</variation>
    <location>
        <position position="396"/>
    </location>
</feature>
<feature type="sequence conflict" description="In Ref. 2; CAA24361." evidence="17" ref="2">
    <original>P</original>
    <variation>L</variation>
    <location>
        <position position="632"/>
    </location>
</feature>
<feature type="helix" evidence="26">
    <location>
        <begin position="229"/>
        <end position="232"/>
    </location>
</feature>
<feature type="helix" evidence="26">
    <location>
        <begin position="268"/>
        <end position="274"/>
    </location>
</feature>
<feature type="strand" evidence="26">
    <location>
        <begin position="301"/>
        <end position="305"/>
    </location>
</feature>
<feature type="strand" evidence="26">
    <location>
        <begin position="308"/>
        <end position="314"/>
    </location>
</feature>
<feature type="helix" evidence="26">
    <location>
        <begin position="332"/>
        <end position="334"/>
    </location>
</feature>
<feature type="helix" evidence="26">
    <location>
        <begin position="342"/>
        <end position="344"/>
    </location>
</feature>
<feature type="strand" evidence="26">
    <location>
        <begin position="348"/>
        <end position="355"/>
    </location>
</feature>
<feature type="strand" evidence="26">
    <location>
        <begin position="364"/>
        <end position="370"/>
    </location>
</feature>
<feature type="helix" evidence="26">
    <location>
        <begin position="376"/>
        <end position="383"/>
    </location>
</feature>
<feature type="strand" evidence="26">
    <location>
        <begin position="384"/>
        <end position="397"/>
    </location>
</feature>
<feature type="strand" evidence="26">
    <location>
        <begin position="404"/>
        <end position="414"/>
    </location>
</feature>
<feature type="helix" evidence="26">
    <location>
        <begin position="422"/>
        <end position="428"/>
    </location>
</feature>
<feature type="strand" evidence="26">
    <location>
        <begin position="429"/>
        <end position="434"/>
    </location>
</feature>
<feature type="turn" evidence="26">
    <location>
        <begin position="436"/>
        <end position="438"/>
    </location>
</feature>
<feature type="strand" evidence="26">
    <location>
        <begin position="440"/>
        <end position="446"/>
    </location>
</feature>
<feature type="strand" evidence="26">
    <location>
        <begin position="450"/>
        <end position="455"/>
    </location>
</feature>
<feature type="turn" evidence="26">
    <location>
        <begin position="457"/>
        <end position="459"/>
    </location>
</feature>
<feature type="strand" evidence="26">
    <location>
        <begin position="463"/>
        <end position="474"/>
    </location>
</feature>
<feature type="strand" evidence="27">
    <location>
        <begin position="477"/>
        <end position="479"/>
    </location>
</feature>
<feature type="strand" evidence="26">
    <location>
        <begin position="483"/>
        <end position="499"/>
    </location>
</feature>
<feature type="helix" evidence="26">
    <location>
        <begin position="548"/>
        <end position="554"/>
    </location>
</feature>
<feature type="turn" evidence="26">
    <location>
        <begin position="562"/>
        <end position="564"/>
    </location>
</feature>
<feature type="strand" evidence="26">
    <location>
        <begin position="565"/>
        <end position="569"/>
    </location>
</feature>
<feature type="strand" evidence="26">
    <location>
        <begin position="572"/>
        <end position="574"/>
    </location>
</feature>
<feature type="strand" evidence="26">
    <location>
        <begin position="577"/>
        <end position="583"/>
    </location>
</feature>
<feature type="helix" evidence="26">
    <location>
        <begin position="588"/>
        <end position="590"/>
    </location>
</feature>
<feature type="helix" evidence="26">
    <location>
        <begin position="594"/>
        <end position="599"/>
    </location>
</feature>
<feature type="strand" evidence="26">
    <location>
        <begin position="602"/>
        <end position="607"/>
    </location>
</feature>
<feature type="strand" evidence="26">
    <location>
        <begin position="609"/>
        <end position="615"/>
    </location>
</feature>
<feature type="strand" evidence="26">
    <location>
        <begin position="622"/>
        <end position="630"/>
    </location>
</feature>
<feature type="strand" evidence="26">
    <location>
        <begin position="632"/>
        <end position="636"/>
    </location>
</feature>
<feature type="helix" evidence="26">
    <location>
        <begin position="641"/>
        <end position="644"/>
    </location>
</feature>
<feature type="strand" evidence="26">
    <location>
        <begin position="647"/>
        <end position="653"/>
    </location>
</feature>
<feature type="strand" evidence="26">
    <location>
        <begin position="659"/>
        <end position="664"/>
    </location>
</feature>
<feature type="strand" evidence="26">
    <location>
        <begin position="669"/>
        <end position="671"/>
    </location>
</feature>
<feature type="strand" evidence="26">
    <location>
        <begin position="673"/>
        <end position="676"/>
    </location>
</feature>
<feature type="strand" evidence="26">
    <location>
        <begin position="688"/>
        <end position="698"/>
    </location>
</feature>
<feature type="strand" evidence="26">
    <location>
        <begin position="703"/>
        <end position="710"/>
    </location>
</feature>
<feature type="strand" evidence="26">
    <location>
        <begin position="715"/>
        <end position="719"/>
    </location>
</feature>
<feature type="helix" evidence="26">
    <location>
        <begin position="730"/>
        <end position="732"/>
    </location>
</feature>
<feature type="helix" evidence="26">
    <location>
        <begin position="740"/>
        <end position="743"/>
    </location>
</feature>
<feature type="helix" evidence="26">
    <location>
        <begin position="753"/>
        <end position="755"/>
    </location>
</feature>
<feature type="helix" evidence="26">
    <location>
        <begin position="757"/>
        <end position="761"/>
    </location>
</feature>
<feature type="strand" evidence="27">
    <location>
        <begin position="763"/>
        <end position="767"/>
    </location>
</feature>
<feature type="strand" evidence="26">
    <location>
        <begin position="772"/>
        <end position="775"/>
    </location>
</feature>
<feature type="helix" evidence="26">
    <location>
        <begin position="778"/>
        <end position="780"/>
    </location>
</feature>
<feature type="helix" evidence="26">
    <location>
        <begin position="786"/>
        <end position="792"/>
    </location>
</feature>
<feature type="strand" evidence="26">
    <location>
        <begin position="794"/>
        <end position="809"/>
    </location>
</feature>
<feature type="strand" evidence="26">
    <location>
        <begin position="811"/>
        <end position="814"/>
    </location>
</feature>
<feature type="helix" evidence="26">
    <location>
        <begin position="820"/>
        <end position="824"/>
    </location>
</feature>
<feature type="strand" evidence="26">
    <location>
        <begin position="828"/>
        <end position="831"/>
    </location>
</feature>
<feature type="strand" evidence="26">
    <location>
        <begin position="838"/>
        <end position="842"/>
    </location>
</feature>
<feature type="strand" evidence="26">
    <location>
        <begin position="847"/>
        <end position="853"/>
    </location>
</feature>
<feature type="strand" evidence="26">
    <location>
        <begin position="890"/>
        <end position="892"/>
    </location>
</feature>
<feature type="strand" evidence="26">
    <location>
        <begin position="894"/>
        <end position="911"/>
    </location>
</feature>
<feature type="strand" evidence="26">
    <location>
        <begin position="921"/>
        <end position="923"/>
    </location>
</feature>
<feature type="strand" evidence="31">
    <location>
        <begin position="936"/>
        <end position="938"/>
    </location>
</feature>
<feature type="helix" evidence="28">
    <location>
        <begin position="1657"/>
        <end position="1664"/>
    </location>
</feature>
<feature type="strand" evidence="28">
    <location>
        <begin position="1665"/>
        <end position="1672"/>
    </location>
</feature>
<feature type="strand" evidence="28">
    <location>
        <begin position="1675"/>
        <end position="1687"/>
    </location>
</feature>
<feature type="strand" evidence="28">
    <location>
        <begin position="1689"/>
        <end position="1693"/>
    </location>
</feature>
<feature type="helix" evidence="28">
    <location>
        <begin position="1694"/>
        <end position="1697"/>
    </location>
</feature>
<feature type="strand" evidence="28">
    <location>
        <begin position="1702"/>
        <end position="1706"/>
    </location>
</feature>
<feature type="strand" evidence="28">
    <location>
        <begin position="1709"/>
        <end position="1711"/>
    </location>
</feature>
<feature type="helix" evidence="28">
    <location>
        <begin position="1713"/>
        <end position="1715"/>
    </location>
</feature>
<feature type="strand" evidence="28">
    <location>
        <begin position="1716"/>
        <end position="1719"/>
    </location>
</feature>
<feature type="strand" evidence="30">
    <location>
        <begin position="1722"/>
        <end position="1725"/>
    </location>
</feature>
<feature type="strand" evidence="28">
    <location>
        <begin position="1726"/>
        <end position="1728"/>
    </location>
</feature>
<feature type="strand" evidence="28">
    <location>
        <begin position="1733"/>
        <end position="1742"/>
    </location>
</feature>
<feature type="helix" evidence="28">
    <location>
        <begin position="1749"/>
        <end position="1751"/>
    </location>
</feature>
<feature type="strand" evidence="29">
    <location>
        <begin position="1752"/>
        <end position="1755"/>
    </location>
</feature>
<feature type="strand" evidence="28">
    <location>
        <begin position="1763"/>
        <end position="1770"/>
    </location>
</feature>
<feature type="turn" evidence="28">
    <location>
        <begin position="1771"/>
        <end position="1773"/>
    </location>
</feature>
<feature type="strand" evidence="28">
    <location>
        <begin position="1774"/>
        <end position="1784"/>
    </location>
</feature>
<feature type="strand" evidence="28">
    <location>
        <begin position="1800"/>
        <end position="1804"/>
    </location>
</feature>
<feature type="strand" evidence="28">
    <location>
        <begin position="1815"/>
        <end position="1820"/>
    </location>
</feature>
<feature type="strand" evidence="28">
    <location>
        <begin position="1823"/>
        <end position="1834"/>
    </location>
</feature>
<feature type="strand" evidence="28">
    <location>
        <begin position="1837"/>
        <end position="1842"/>
    </location>
</feature>
<feature type="helix" evidence="28">
    <location>
        <begin position="1845"/>
        <end position="1853"/>
    </location>
</feature>
<organism>
    <name type="scientific">Foot-and-mouth disease virus (strain A10/Holland/1961 serotype A)</name>
    <name type="common">FMDV</name>
    <dbReference type="NCBI Taxonomy" id="12112"/>
    <lineage>
        <taxon>Viruses</taxon>
        <taxon>Riboviria</taxon>
        <taxon>Orthornavirae</taxon>
        <taxon>Pisuviricota</taxon>
        <taxon>Pisoniviricetes</taxon>
        <taxon>Picornavirales</taxon>
        <taxon>Picornaviridae</taxon>
        <taxon>Caphthovirinae</taxon>
        <taxon>Aphthovirus</taxon>
        <taxon>Foot-and-mouth disease virus</taxon>
    </lineage>
</organism>
<name>POLG_FMDV1</name>
<dbReference type="EC" id="3.4.22.46" evidence="4"/>
<dbReference type="EC" id="3.6.1.15" evidence="4"/>
<dbReference type="EC" id="3.4.22.28"/>
<dbReference type="EC" id="2.7.7.48" evidence="4"/>
<dbReference type="EMBL" id="X00429">
    <property type="protein sequence ID" value="CAA25127.1"/>
    <property type="status" value="ALT_FRAME"/>
    <property type="molecule type" value="Genomic_RNA"/>
</dbReference>
<dbReference type="EMBL" id="V01130">
    <property type="protein sequence ID" value="CAA24361.1"/>
    <property type="molecule type" value="Genomic_RNA"/>
</dbReference>
<dbReference type="PIR" id="A93508">
    <property type="entry name" value="GNNY2F"/>
</dbReference>
<dbReference type="PDB" id="1ZBA">
    <property type="method" value="X-ray"/>
    <property type="resolution" value="2.00 A"/>
    <property type="chains" value="1=726-937, 2=287-504, 3=505-725, 4=202-286"/>
</dbReference>
<dbReference type="PDB" id="1ZBE">
    <property type="method" value="X-ray"/>
    <property type="resolution" value="3.00 A"/>
    <property type="chains" value="1=726-937, 2=287-504, 3=505-725, 4=202-286"/>
</dbReference>
<dbReference type="PDB" id="2BHG">
    <property type="method" value="X-ray"/>
    <property type="resolution" value="1.90 A"/>
    <property type="chains" value="A/B=1650-1855"/>
</dbReference>
<dbReference type="PDB" id="2J92">
    <property type="method" value="X-ray"/>
    <property type="resolution" value="2.20 A"/>
    <property type="chains" value="A/B=1649-1855"/>
</dbReference>
<dbReference type="PDB" id="2WV4">
    <property type="method" value="X-ray"/>
    <property type="resolution" value="2.50 A"/>
    <property type="chains" value="A/B=1650-1862, C/D=931-940"/>
</dbReference>
<dbReference type="PDB" id="2WV5">
    <property type="method" value="X-ray"/>
    <property type="resolution" value="2.70 A"/>
    <property type="chains" value="A/B/C/D=1650-1862, E/F/G/H=936-940"/>
</dbReference>
<dbReference type="PDB" id="5OWX">
    <property type="method" value="EM"/>
    <property type="resolution" value="5.20 A"/>
    <property type="chains" value="1=752-933, 2=315-496, 3=505-725"/>
</dbReference>
<dbReference type="PDB" id="5OYI">
    <property type="method" value="EM"/>
    <property type="resolution" value="8.20 A"/>
    <property type="chains" value="1/A/D/G/J=752-933, 2/B/E/H/K=315-496, 3/C/F/I/L=505-725"/>
</dbReference>
<dbReference type="PDBsum" id="1ZBA"/>
<dbReference type="PDBsum" id="1ZBE"/>
<dbReference type="PDBsum" id="2BHG"/>
<dbReference type="PDBsum" id="2J92"/>
<dbReference type="PDBsum" id="2WV4"/>
<dbReference type="PDBsum" id="2WV5"/>
<dbReference type="PDBsum" id="5OWX"/>
<dbReference type="PDBsum" id="5OYI"/>
<dbReference type="EMDB" id="EMD-3856"/>
<dbReference type="EMDB" id="EMD-3862"/>
<dbReference type="SMR" id="P03306"/>
<dbReference type="MEROPS" id="C03.008"/>
<dbReference type="EvolutionaryTrace" id="P03306"/>
<dbReference type="Proteomes" id="UP000008764">
    <property type="component" value="Genome"/>
</dbReference>
<dbReference type="GO" id="GO:0044162">
    <property type="term" value="C:host cell cytoplasmic vesicle membrane"/>
    <property type="evidence" value="ECO:0007669"/>
    <property type="project" value="UniProtKB-SubCell"/>
</dbReference>
<dbReference type="GO" id="GO:0044167">
    <property type="term" value="C:host cell endoplasmic reticulum membrane"/>
    <property type="evidence" value="ECO:0007669"/>
    <property type="project" value="UniProtKB-SubCell"/>
</dbReference>
<dbReference type="GO" id="GO:0042025">
    <property type="term" value="C:host cell nucleus"/>
    <property type="evidence" value="ECO:0007669"/>
    <property type="project" value="UniProtKB-SubCell"/>
</dbReference>
<dbReference type="GO" id="GO:0016020">
    <property type="term" value="C:membrane"/>
    <property type="evidence" value="ECO:0007669"/>
    <property type="project" value="UniProtKB-KW"/>
</dbReference>
<dbReference type="GO" id="GO:0039618">
    <property type="term" value="C:T=pseudo3 icosahedral viral capsid"/>
    <property type="evidence" value="ECO:0007669"/>
    <property type="project" value="UniProtKB-KW"/>
</dbReference>
<dbReference type="GO" id="GO:0005524">
    <property type="term" value="F:ATP binding"/>
    <property type="evidence" value="ECO:0007669"/>
    <property type="project" value="UniProtKB-KW"/>
</dbReference>
<dbReference type="GO" id="GO:0015267">
    <property type="term" value="F:channel activity"/>
    <property type="evidence" value="ECO:0007669"/>
    <property type="project" value="UniProtKB-KW"/>
</dbReference>
<dbReference type="GO" id="GO:0004197">
    <property type="term" value="F:cysteine-type endopeptidase activity"/>
    <property type="evidence" value="ECO:0007669"/>
    <property type="project" value="UniProtKB-EC"/>
</dbReference>
<dbReference type="GO" id="GO:0017111">
    <property type="term" value="F:ribonucleoside triphosphate phosphatase activity"/>
    <property type="evidence" value="ECO:0007669"/>
    <property type="project" value="UniProtKB-EC"/>
</dbReference>
<dbReference type="GO" id="GO:0003723">
    <property type="term" value="F:RNA binding"/>
    <property type="evidence" value="ECO:0007669"/>
    <property type="project" value="UniProtKB-KW"/>
</dbReference>
<dbReference type="GO" id="GO:0003724">
    <property type="term" value="F:RNA helicase activity"/>
    <property type="evidence" value="ECO:0007669"/>
    <property type="project" value="InterPro"/>
</dbReference>
<dbReference type="GO" id="GO:0003968">
    <property type="term" value="F:RNA-directed RNA polymerase activity"/>
    <property type="evidence" value="ECO:0007669"/>
    <property type="project" value="UniProtKB-KW"/>
</dbReference>
<dbReference type="GO" id="GO:0005198">
    <property type="term" value="F:structural molecule activity"/>
    <property type="evidence" value="ECO:0007669"/>
    <property type="project" value="InterPro"/>
</dbReference>
<dbReference type="GO" id="GO:0075512">
    <property type="term" value="P:clathrin-dependent endocytosis of virus by host cell"/>
    <property type="evidence" value="ECO:0007669"/>
    <property type="project" value="UniProtKB-KW"/>
</dbReference>
<dbReference type="GO" id="GO:0006351">
    <property type="term" value="P:DNA-templated transcription"/>
    <property type="evidence" value="ECO:0007669"/>
    <property type="project" value="InterPro"/>
</dbReference>
<dbReference type="GO" id="GO:0034220">
    <property type="term" value="P:monoatomic ion transmembrane transport"/>
    <property type="evidence" value="ECO:0007669"/>
    <property type="project" value="UniProtKB-KW"/>
</dbReference>
<dbReference type="GO" id="GO:0006508">
    <property type="term" value="P:proteolysis"/>
    <property type="evidence" value="ECO:0007669"/>
    <property type="project" value="UniProtKB-KW"/>
</dbReference>
<dbReference type="GO" id="GO:0006417">
    <property type="term" value="P:regulation of translation"/>
    <property type="evidence" value="ECO:0007669"/>
    <property type="project" value="UniProtKB-KW"/>
</dbReference>
<dbReference type="GO" id="GO:0039520">
    <property type="term" value="P:symbiont-mediated activation of host autophagy"/>
    <property type="evidence" value="ECO:0000250"/>
    <property type="project" value="UniProtKB"/>
</dbReference>
<dbReference type="GO" id="GO:0039525">
    <property type="term" value="P:symbiont-mediated perturbation of host chromatin organization"/>
    <property type="evidence" value="ECO:0007669"/>
    <property type="project" value="UniProtKB-KW"/>
</dbReference>
<dbReference type="GO" id="GO:0019082">
    <property type="term" value="P:viral protein processing"/>
    <property type="evidence" value="ECO:0007669"/>
    <property type="project" value="InterPro"/>
</dbReference>
<dbReference type="GO" id="GO:0039694">
    <property type="term" value="P:viral RNA genome replication"/>
    <property type="evidence" value="ECO:0007669"/>
    <property type="project" value="InterPro"/>
</dbReference>
<dbReference type="GO" id="GO:0019062">
    <property type="term" value="P:virion attachment to host cell"/>
    <property type="evidence" value="ECO:0007669"/>
    <property type="project" value="UniProtKB-KW"/>
</dbReference>
<dbReference type="CDD" id="cd23210">
    <property type="entry name" value="Aphthovirus_RdRp"/>
    <property type="match status" value="1"/>
</dbReference>
<dbReference type="CDD" id="cd00205">
    <property type="entry name" value="rhv_like"/>
    <property type="match status" value="3"/>
</dbReference>
<dbReference type="FunFam" id="1.20.960.20:FF:000002">
    <property type="entry name" value="Genome polyprotein"/>
    <property type="match status" value="1"/>
</dbReference>
<dbReference type="FunFam" id="2.60.120.20:FF:000005">
    <property type="entry name" value="Genome polyprotein"/>
    <property type="match status" value="1"/>
</dbReference>
<dbReference type="FunFam" id="2.60.120.20:FF:000006">
    <property type="entry name" value="Genome polyprotein"/>
    <property type="match status" value="1"/>
</dbReference>
<dbReference type="FunFam" id="2.60.120.20:FF:000012">
    <property type="entry name" value="Genome polyprotein"/>
    <property type="match status" value="1"/>
</dbReference>
<dbReference type="FunFam" id="3.30.70.270:FF:000031">
    <property type="entry name" value="Genome polyprotein"/>
    <property type="match status" value="1"/>
</dbReference>
<dbReference type="Gene3D" id="1.20.960.20">
    <property type="match status" value="1"/>
</dbReference>
<dbReference type="Gene3D" id="2.60.120.20">
    <property type="match status" value="3"/>
</dbReference>
<dbReference type="Gene3D" id="3.30.70.270">
    <property type="match status" value="2"/>
</dbReference>
<dbReference type="Gene3D" id="4.10.90.10">
    <property type="entry name" value="Capsid protein VP4 superfamily, Picornavirus"/>
    <property type="match status" value="1"/>
</dbReference>
<dbReference type="Gene3D" id="3.90.70.10">
    <property type="entry name" value="Cysteine proteinases"/>
    <property type="match status" value="1"/>
</dbReference>
<dbReference type="Gene3D" id="2.40.10.10">
    <property type="entry name" value="Trypsin-like serine proteases"/>
    <property type="match status" value="2"/>
</dbReference>
<dbReference type="InterPro" id="IPR015031">
    <property type="entry name" value="Capsid_VP4_Picornavir"/>
</dbReference>
<dbReference type="InterPro" id="IPR037080">
    <property type="entry name" value="Capsid_VP4_sf_Picornavirus"/>
</dbReference>
<dbReference type="InterPro" id="IPR043502">
    <property type="entry name" value="DNA/RNA_pol_sf"/>
</dbReference>
<dbReference type="InterPro" id="IPR004080">
    <property type="entry name" value="FMDV_VP1_coat"/>
</dbReference>
<dbReference type="InterPro" id="IPR004004">
    <property type="entry name" value="Helic/Pol/Pept_Calicivir-typ"/>
</dbReference>
<dbReference type="InterPro" id="IPR000605">
    <property type="entry name" value="Helicase_SF3_ssDNA/RNA_vir"/>
</dbReference>
<dbReference type="InterPro" id="IPR014759">
    <property type="entry name" value="Helicase_SF3_ssRNA_vir"/>
</dbReference>
<dbReference type="InterPro" id="IPR027417">
    <property type="entry name" value="P-loop_NTPase"/>
</dbReference>
<dbReference type="InterPro" id="IPR038765">
    <property type="entry name" value="Papain-like_cys_pep_sf"/>
</dbReference>
<dbReference type="InterPro" id="IPR044067">
    <property type="entry name" value="PCV_3C_PRO"/>
</dbReference>
<dbReference type="InterPro" id="IPR008739">
    <property type="entry name" value="Peptidase_C28"/>
</dbReference>
<dbReference type="InterPro" id="IPR000199">
    <property type="entry name" value="Peptidase_C3A/C3B_picornavir"/>
</dbReference>
<dbReference type="InterPro" id="IPR009003">
    <property type="entry name" value="Peptidase_S1_PA"/>
</dbReference>
<dbReference type="InterPro" id="IPR043504">
    <property type="entry name" value="Peptidase_S1_PA_chymotrypsin"/>
</dbReference>
<dbReference type="InterPro" id="IPR001676">
    <property type="entry name" value="Picornavirus_capsid"/>
</dbReference>
<dbReference type="InterPro" id="IPR043128">
    <property type="entry name" value="Rev_trsase/Diguanyl_cyclase"/>
</dbReference>
<dbReference type="InterPro" id="IPR033703">
    <property type="entry name" value="Rhv-like"/>
</dbReference>
<dbReference type="InterPro" id="IPR001205">
    <property type="entry name" value="RNA-dir_pol_C"/>
</dbReference>
<dbReference type="InterPro" id="IPR007094">
    <property type="entry name" value="RNA-dir_pol_PSvirus"/>
</dbReference>
<dbReference type="InterPro" id="IPR029053">
    <property type="entry name" value="Viral_coat"/>
</dbReference>
<dbReference type="Pfam" id="PF05408">
    <property type="entry name" value="Peptidase_C28"/>
    <property type="match status" value="1"/>
</dbReference>
<dbReference type="Pfam" id="PF00548">
    <property type="entry name" value="Peptidase_C3"/>
    <property type="match status" value="1"/>
</dbReference>
<dbReference type="Pfam" id="PF00680">
    <property type="entry name" value="RdRP_1"/>
    <property type="match status" value="1"/>
</dbReference>
<dbReference type="Pfam" id="PF00073">
    <property type="entry name" value="Rhv"/>
    <property type="match status" value="2"/>
</dbReference>
<dbReference type="Pfam" id="PF22663">
    <property type="entry name" value="Rhv_5"/>
    <property type="match status" value="1"/>
</dbReference>
<dbReference type="Pfam" id="PF00910">
    <property type="entry name" value="RNA_helicase"/>
    <property type="match status" value="1"/>
</dbReference>
<dbReference type="Pfam" id="PF08935">
    <property type="entry name" value="VP4_2"/>
    <property type="match status" value="1"/>
</dbReference>
<dbReference type="PRINTS" id="PR00918">
    <property type="entry name" value="CALICVIRUSNS"/>
</dbReference>
<dbReference type="PRINTS" id="PR01542">
    <property type="entry name" value="FMDVP1COAT"/>
</dbReference>
<dbReference type="SUPFAM" id="SSF54001">
    <property type="entry name" value="Cysteine proteinases"/>
    <property type="match status" value="1"/>
</dbReference>
<dbReference type="SUPFAM" id="SSF56672">
    <property type="entry name" value="DNA/RNA polymerases"/>
    <property type="match status" value="1"/>
</dbReference>
<dbReference type="SUPFAM" id="SSF52540">
    <property type="entry name" value="P-loop containing nucleoside triphosphate hydrolases"/>
    <property type="match status" value="1"/>
</dbReference>
<dbReference type="SUPFAM" id="SSF88633">
    <property type="entry name" value="Positive stranded ssRNA viruses"/>
    <property type="match status" value="2"/>
</dbReference>
<dbReference type="SUPFAM" id="SSF50494">
    <property type="entry name" value="Trypsin-like serine proteases"/>
    <property type="match status" value="1"/>
</dbReference>
<dbReference type="PROSITE" id="PS51887">
    <property type="entry name" value="APHTHOVIRUS_LPRO"/>
    <property type="match status" value="1"/>
</dbReference>
<dbReference type="PROSITE" id="PS51874">
    <property type="entry name" value="PCV_3C_PRO"/>
    <property type="match status" value="1"/>
</dbReference>
<dbReference type="PROSITE" id="PS50507">
    <property type="entry name" value="RDRP_SSRNA_POS"/>
    <property type="match status" value="1"/>
</dbReference>
<dbReference type="PROSITE" id="PS51218">
    <property type="entry name" value="SF3_HELICASE_2"/>
    <property type="match status" value="1"/>
</dbReference>
<evidence type="ECO:0000250" key="1"/>
<evidence type="ECO:0000250" key="2">
    <source>
        <dbReference type="UniProtKB" id="A2I7M2"/>
    </source>
</evidence>
<evidence type="ECO:0000250" key="3">
    <source>
        <dbReference type="UniProtKB" id="P03300"/>
    </source>
</evidence>
<evidence type="ECO:0000250" key="4">
    <source>
        <dbReference type="UniProtKB" id="P03305"/>
    </source>
</evidence>
<evidence type="ECO:0000250" key="5">
    <source>
        <dbReference type="UniProtKB" id="P03308"/>
    </source>
</evidence>
<evidence type="ECO:0000250" key="6">
    <source>
        <dbReference type="UniProtKB" id="P03311"/>
    </source>
</evidence>
<evidence type="ECO:0000250" key="7">
    <source>
        <dbReference type="UniProtKB" id="P12296"/>
    </source>
</evidence>
<evidence type="ECO:0000255" key="8"/>
<evidence type="ECO:0000255" key="9">
    <source>
        <dbReference type="PROSITE-ProRule" id="PRU00539"/>
    </source>
</evidence>
<evidence type="ECO:0000255" key="10">
    <source>
        <dbReference type="PROSITE-ProRule" id="PRU00551"/>
    </source>
</evidence>
<evidence type="ECO:0000255" key="11">
    <source>
        <dbReference type="PROSITE-ProRule" id="PRU01222"/>
    </source>
</evidence>
<evidence type="ECO:0000256" key="12">
    <source>
        <dbReference type="SAM" id="MobiDB-lite"/>
    </source>
</evidence>
<evidence type="ECO:0000269" key="13">
    <source>
    </source>
</evidence>
<evidence type="ECO:0000269" key="14">
    <source>
    </source>
</evidence>
<evidence type="ECO:0000269" key="15">
    <source>
    </source>
</evidence>
<evidence type="ECO:0000269" key="16">
    <source>
    </source>
</evidence>
<evidence type="ECO:0000305" key="17"/>
<evidence type="ECO:0007744" key="18">
    <source>
        <dbReference type="PDB" id="1ZBA"/>
    </source>
</evidence>
<evidence type="ECO:0007744" key="19">
    <source>
        <dbReference type="PDB" id="1ZBE"/>
    </source>
</evidence>
<evidence type="ECO:0007744" key="20">
    <source>
        <dbReference type="PDB" id="2BHG"/>
    </source>
</evidence>
<evidence type="ECO:0007744" key="21">
    <source>
        <dbReference type="PDB" id="2J92"/>
    </source>
</evidence>
<evidence type="ECO:0007744" key="22">
    <source>
        <dbReference type="PDB" id="2WV4"/>
    </source>
</evidence>
<evidence type="ECO:0007744" key="23">
    <source>
        <dbReference type="PDB" id="2WV5"/>
    </source>
</evidence>
<evidence type="ECO:0007744" key="24">
    <source>
        <dbReference type="PDB" id="5OWX"/>
    </source>
</evidence>
<evidence type="ECO:0007744" key="25">
    <source>
        <dbReference type="PDB" id="5OYI"/>
    </source>
</evidence>
<evidence type="ECO:0007829" key="26">
    <source>
        <dbReference type="PDB" id="1ZBA"/>
    </source>
</evidence>
<evidence type="ECO:0007829" key="27">
    <source>
        <dbReference type="PDB" id="1ZBE"/>
    </source>
</evidence>
<evidence type="ECO:0007829" key="28">
    <source>
        <dbReference type="PDB" id="2BHG"/>
    </source>
</evidence>
<evidence type="ECO:0007829" key="29">
    <source>
        <dbReference type="PDB" id="2J92"/>
    </source>
</evidence>
<evidence type="ECO:0007829" key="30">
    <source>
        <dbReference type="PDB" id="2WV4"/>
    </source>
</evidence>
<evidence type="ECO:0007829" key="31">
    <source>
        <dbReference type="PDB" id="2WV5"/>
    </source>
</evidence>